<comment type="function">
    <text evidence="1 5 6 7 9 10 11">Involved in neuronal differentiation, including differentiation and migration of neuronal stem cells (By similarity). Plays a role in neuronal plasticity and is involved in neurite and filopodia outgrowth, filopodia motility and probably synapse formation. Gpm6a-induced filopodia formation involves mitogen-activated protein kinase (MAPK) and Src signaling pathways. May be involved in neuronal NGF-dependent Ca(2+) influx. May be involved in regulation of endocytosis and intracellular trafficking of G-protein-coupled receptors (GPCRs); enhances internalization and recycling of mu-type opioid receptor.</text>
</comment>
<comment type="subunit">
    <text evidence="3 7">Interacts with OPRM1 (PubMed:17548356). Interacts with palmitoyltransferase ZDHHC17/HIP14; the interaction leads to palmitoylation of GPM6A (By similarity).</text>
</comment>
<comment type="interaction">
    <interactant intactId="EBI-6113756">
        <id>Q812E9</id>
    </interactant>
    <interactant intactId="EBI-4392569">
        <id>P33535</id>
        <label>Oprm1</label>
    </interactant>
    <organismsDiffer>false</organismsDiffer>
    <experiments>7</experiments>
</comment>
<comment type="subcellular location">
    <subcellularLocation>
        <location evidence="6 11">Cell membrane</location>
        <topology>Multi-pass membrane protein</topology>
    </subcellularLocation>
    <subcellularLocation>
        <location evidence="10">Cell projection</location>
        <location evidence="10">Axon</location>
    </subcellularLocation>
    <subcellularLocation>
        <location evidence="2">Cell projection</location>
        <location evidence="2">Growth cone</location>
    </subcellularLocation>
    <subcellularLocation>
        <location evidence="6">Cell projection</location>
        <location evidence="6">Dendritic spine</location>
    </subcellularLocation>
    <subcellularLocation>
        <location evidence="6">Cell projection</location>
        <location evidence="6">Filopodium</location>
    </subcellularLocation>
    <subcellularLocation>
        <location evidence="6 11">Cell projection</location>
        <location evidence="6 11">Neuron projection</location>
    </subcellularLocation>
    <text evidence="2 6 11">Localizes to cholesterol-rich lipid rafts of the plasma membrane of hippocampal neurons (PubMed:21426347). Localized to plasma membrane of cell bodies and neurites of hippocampal neurons (PubMed:16286650). Localized in membrane protrusions (filopodia and spines) of primary hippocampal neurons (PubMed:16286650). Localized to the growth cone edge membrane of elongating axons (By similarity).</text>
</comment>
<comment type="alternative products">
    <event type="alternative splicing"/>
    <isoform>
        <id>Q812E9-1</id>
        <name>1</name>
        <name>Ib</name>
        <sequence type="displayed"/>
    </isoform>
    <isoform>
        <id>Q812E9-2</id>
        <name>2</name>
        <name>Ia</name>
        <sequence type="described" ref="VSP_043957"/>
    </isoform>
</comment>
<comment type="tissue specificity">
    <text evidence="6 8">Expressed in hippocampus (at protein level). Isoform 1 is the predominant isoform expressed in brain, specifically in hippocampus. Isoform 2 is expressed at low levels in brain and kidney.</text>
</comment>
<comment type="induction">
    <molecule>Isoform 1</molecule>
    <text evidence="8">Down-regulated by chronic stress in dentate gyrus granule neurons and CA3 pyramidal neurons.</text>
</comment>
<comment type="induction">
    <molecule>Isoform 2</molecule>
    <text evidence="8">Up-regulated in the medial prefrontal cortex.</text>
</comment>
<comment type="PTM">
    <text evidence="3">N-glycosylated.</text>
</comment>
<comment type="PTM">
    <text evidence="3">Palmitoylated by ZDHHC17/HIP14.</text>
</comment>
<comment type="similarity">
    <text evidence="13">Belongs to the myelin proteolipid protein family.</text>
</comment>
<keyword id="KW-0007">Acetylation</keyword>
<keyword id="KW-0025">Alternative splicing</keyword>
<keyword id="KW-1003">Cell membrane</keyword>
<keyword id="KW-0966">Cell projection</keyword>
<keyword id="KW-1015">Disulfide bond</keyword>
<keyword id="KW-0325">Glycoprotein</keyword>
<keyword id="KW-0449">Lipoprotein</keyword>
<keyword id="KW-0472">Membrane</keyword>
<keyword id="KW-0524">Neurogenesis</keyword>
<keyword id="KW-0564">Palmitate</keyword>
<keyword id="KW-0597">Phosphoprotein</keyword>
<keyword id="KW-1185">Reference proteome</keyword>
<keyword id="KW-0770">Synapse</keyword>
<keyword id="KW-0812">Transmembrane</keyword>
<keyword id="KW-1133">Transmembrane helix</keyword>
<proteinExistence type="evidence at protein level"/>
<protein>
    <recommendedName>
        <fullName>Neuronal membrane glycoprotein M6-a</fullName>
        <shortName>M6a</shortName>
    </recommendedName>
</protein>
<sequence length="278" mass="31196">MEENMEEGQTQKGCFECCIKCLGGIPYASLIATILLYAGVALFCGCGHEALSGTVNILQTYFEMARTAGDTLDVFTMIDIFKYVIYGIAAAFFVYGILLMVEGFFTTGAIKDLYGDFKITTCGRCVSAWFIMLTYLFMLAWLGVTAFTSLPVYMYFNVWTICRNTTLVEGANLCLDLRQFGIVTIGEEKKICTVSENFLRMCESTELNMTFHLFIVALAGAGAAVIAMVHYLMVLSANWAYVKDACRMQKYEDIKSKEEQELHDIHSTRSKERLNAYT</sequence>
<name>GPM6A_RAT</name>
<evidence type="ECO:0000250" key="1"/>
<evidence type="ECO:0000250" key="2">
    <source>
        <dbReference type="UniProtKB" id="P35802"/>
    </source>
</evidence>
<evidence type="ECO:0000250" key="3">
    <source>
        <dbReference type="UniProtKB" id="P51674"/>
    </source>
</evidence>
<evidence type="ECO:0000255" key="4"/>
<evidence type="ECO:0000269" key="5">
    <source>
    </source>
</evidence>
<evidence type="ECO:0000269" key="6">
    <source>
    </source>
</evidence>
<evidence type="ECO:0000269" key="7">
    <source>
    </source>
</evidence>
<evidence type="ECO:0000269" key="8">
    <source>
    </source>
</evidence>
<evidence type="ECO:0000269" key="9">
    <source>
    </source>
</evidence>
<evidence type="ECO:0000269" key="10">
    <source>
    </source>
</evidence>
<evidence type="ECO:0000269" key="11">
    <source>
    </source>
</evidence>
<evidence type="ECO:0000303" key="12">
    <source>
    </source>
</evidence>
<evidence type="ECO:0000305" key="13"/>
<evidence type="ECO:0007744" key="14">
    <source>
    </source>
</evidence>
<organism>
    <name type="scientific">Rattus norvegicus</name>
    <name type="common">Rat</name>
    <dbReference type="NCBI Taxonomy" id="10116"/>
    <lineage>
        <taxon>Eukaryota</taxon>
        <taxon>Metazoa</taxon>
        <taxon>Chordata</taxon>
        <taxon>Craniata</taxon>
        <taxon>Vertebrata</taxon>
        <taxon>Euteleostomi</taxon>
        <taxon>Mammalia</taxon>
        <taxon>Eutheria</taxon>
        <taxon>Euarchontoglires</taxon>
        <taxon>Glires</taxon>
        <taxon>Rodentia</taxon>
        <taxon>Myomorpha</taxon>
        <taxon>Muroidea</taxon>
        <taxon>Muridae</taxon>
        <taxon>Murinae</taxon>
        <taxon>Rattus</taxon>
    </lineage>
</organism>
<reference key="1">
    <citation type="journal article" date="2002" name="Biochem. Biophys. Res. Commun.">
        <title>M6a acts as a nerve growth factor-gated Ca(2+) channel in neuronal differentiation.</title>
        <authorList>
            <person name="Mukobata S."/>
            <person name="Hibino T."/>
            <person name="Sugiyama A."/>
            <person name="Urano Y."/>
            <person name="Inatomi A."/>
            <person name="Kanai Y."/>
            <person name="Endo H."/>
            <person name="Tashiro F."/>
        </authorList>
    </citation>
    <scope>NUCLEOTIDE SEQUENCE [MRNA] (ISOFORM 1)</scope>
    <scope>FUNCTION</scope>
</reference>
<reference key="2">
    <citation type="submission" date="2005-09" db="EMBL/GenBank/DDBJ databases">
        <authorList>
            <person name="Mural R.J."/>
            <person name="Adams M.D."/>
            <person name="Myers E.W."/>
            <person name="Smith H.O."/>
            <person name="Venter J.C."/>
        </authorList>
    </citation>
    <scope>NUCLEOTIDE SEQUENCE [LARGE SCALE GENOMIC DNA]</scope>
</reference>
<reference key="3">
    <citation type="journal article" date="2004" name="Genome Res.">
        <title>The status, quality, and expansion of the NIH full-length cDNA project: the Mammalian Gene Collection (MGC).</title>
        <authorList>
            <consortium name="The MGC Project Team"/>
        </authorList>
    </citation>
    <scope>NUCLEOTIDE SEQUENCE [LARGE SCALE MRNA] (ISOFORM 1)</scope>
    <source>
        <tissue>Brain</tissue>
    </source>
</reference>
<reference key="4">
    <citation type="journal article" date="2004" name="Invest. Ophthalmol. Vis. Sci.">
        <title>Gene expression profile of the rat eye iridocorneal angle: NEIBank expressed sequence tag analysis.</title>
        <authorList>
            <person name="Ahmed F."/>
            <person name="Torrado M."/>
            <person name="Zinovieva R.D."/>
            <person name="Senatorov V.V."/>
            <person name="Wistow G."/>
            <person name="Tomarev S.I."/>
        </authorList>
    </citation>
    <scope>NUCLEOTIDE SEQUENCE [LARGE SCALE MRNA] OF 1-188 (ISOFORM 2)</scope>
</reference>
<reference key="5">
    <citation type="journal article" date="2005" name="Proc. Natl. Acad. Sci. U.S.A.">
        <title>The stress-regulated protein M6a is a key modulator for neurite outgrowth and filopodium/spine formation.</title>
        <authorList>
            <person name="Alfonso J."/>
            <person name="Fernandez M.E."/>
            <person name="Cooper B."/>
            <person name="Flugge G."/>
            <person name="Frasch A.C."/>
        </authorList>
    </citation>
    <scope>FUNCTION</scope>
    <scope>TISSUE SPECIFICITY</scope>
    <scope>SUBCELLULAR LOCATION</scope>
</reference>
<reference key="6">
    <citation type="journal article" date="2007" name="J. Biol. Chem.">
        <title>Membrane glycoprotein M6a interacts with the micro-opioid receptor and facilitates receptor endocytosis and recycling.</title>
        <authorList>
            <person name="Wu D.F."/>
            <person name="Koch T."/>
            <person name="Liang Y.J."/>
            <person name="Stumm R."/>
            <person name="Schulz S."/>
            <person name="Schroder H."/>
            <person name="Hollt V."/>
        </authorList>
    </citation>
    <scope>FUNCTION</scope>
    <scope>INTERACTION WITH OPRM1</scope>
</reference>
<reference key="7">
    <citation type="journal article" date="2009" name="J. Biol. Chem.">
        <title>Cysteine residues in the large extracellular loop (EC2) are essential for the function of the stress-regulated glycoprotein M6a.</title>
        <authorList>
            <person name="Fuchsova B."/>
            <person name="Fernandez M.E."/>
            <person name="Alfonso J."/>
            <person name="Frasch A.C."/>
        </authorList>
    </citation>
    <scope>FUNCTION</scope>
    <scope>TOPOLOGY</scope>
    <scope>DISULFIDE BOND</scope>
    <scope>MUTAGENESIS OF CYS-162; CYS-174; CYS-192 AND CYS-202</scope>
</reference>
<reference key="8">
    <citation type="journal article" date="2009" name="PLoS ONE">
        <title>Expression of the axonal membrane glycoprotein M6a is regulated by chronic stress.</title>
        <authorList>
            <person name="Cooper B."/>
            <person name="Fuchs E."/>
            <person name="Flugge G."/>
        </authorList>
    </citation>
    <scope>ALTERNATIVE SPLICING (ISOFORM 2)</scope>
    <scope>TISSUE SPECIFICITY</scope>
    <scope>INDUCTION</scope>
</reference>
<reference key="9">
    <citation type="journal article" date="2010" name="Eur. J. Neurosci.">
        <title>Filopodial protrusions induced by glycoprotein M6a exhibit high motility and aids synapse formation.</title>
        <authorList>
            <person name="Brocco M.A."/>
            <person name="Fernandez M.E."/>
            <person name="Frasch A.C."/>
        </authorList>
    </citation>
    <scope>FUNCTION</scope>
    <scope>MUTAGENESIS OF THR-10; SER-256; SER-267 AND THR-268</scope>
    <scope>SUBCELLULAR LOCATION</scope>
</reference>
<reference key="10">
    <citation type="journal article" date="2011" name="J. Neurochem.">
        <title>Neuronal glycoprotein M6a induces filopodia formation via association with cholesterol-rich lipid rafts.</title>
        <authorList>
            <person name="Scorticati C."/>
            <person name="Formoso K."/>
            <person name="Frasch A.C."/>
        </authorList>
    </citation>
    <scope>FUNCTION</scope>
    <scope>SUBCELLULAR LOCATION</scope>
</reference>
<reference key="11">
    <citation type="journal article" date="2012" name="Nat. Commun.">
        <title>Quantitative maps of protein phosphorylation sites across 14 different rat organs and tissues.</title>
        <authorList>
            <person name="Lundby A."/>
            <person name="Secher A."/>
            <person name="Lage K."/>
            <person name="Nordsborg N.B."/>
            <person name="Dmytriyev A."/>
            <person name="Lundby C."/>
            <person name="Olsen J.V."/>
        </authorList>
    </citation>
    <scope>PHOSPHORYLATION [LARGE SCALE ANALYSIS] AT SER-256 AND THR-278</scope>
    <scope>IDENTIFICATION BY MASS SPECTROMETRY [LARGE SCALE ANALYSIS]</scope>
</reference>
<dbReference type="EMBL" id="AB089242">
    <property type="protein sequence ID" value="BAC56699.1"/>
    <property type="molecule type" value="mRNA"/>
</dbReference>
<dbReference type="EMBL" id="CH473995">
    <property type="protein sequence ID" value="EDL78956.1"/>
    <property type="molecule type" value="Genomic_DNA"/>
</dbReference>
<dbReference type="EMBL" id="BC088862">
    <property type="protein sequence ID" value="AAH88862.1"/>
    <property type="molecule type" value="mRNA"/>
</dbReference>
<dbReference type="EMBL" id="DV216104">
    <property type="status" value="NOT_ANNOTATED_CDS"/>
    <property type="molecule type" value="mRNA"/>
</dbReference>
<dbReference type="RefSeq" id="NP_001381462.1">
    <molecule id="Q812E9-2"/>
    <property type="nucleotide sequence ID" value="NM_001394533.1"/>
</dbReference>
<dbReference type="RefSeq" id="NP_835206.1">
    <molecule id="Q812E9-1"/>
    <property type="nucleotide sequence ID" value="NM_178105.3"/>
</dbReference>
<dbReference type="BioGRID" id="258452">
    <property type="interactions" value="1"/>
</dbReference>
<dbReference type="FunCoup" id="Q812E9">
    <property type="interactions" value="604"/>
</dbReference>
<dbReference type="IntAct" id="Q812E9">
    <property type="interactions" value="1"/>
</dbReference>
<dbReference type="STRING" id="10116.ENSRNOP00000014312"/>
<dbReference type="GlyCosmos" id="Q812E9">
    <property type="glycosylation" value="2 sites, No reported glycans"/>
</dbReference>
<dbReference type="GlyGen" id="Q812E9">
    <property type="glycosylation" value="2 sites"/>
</dbReference>
<dbReference type="iPTMnet" id="Q812E9"/>
<dbReference type="PhosphoSitePlus" id="Q812E9"/>
<dbReference type="SwissPalm" id="Q812E9"/>
<dbReference type="PaxDb" id="10116-ENSRNOP00000014312"/>
<dbReference type="Ensembl" id="ENSRNOT00000014312.8">
    <molecule id="Q812E9-1"/>
    <property type="protein sequence ID" value="ENSRNOP00000014312.4"/>
    <property type="gene ID" value="ENSRNOG00000010731.8"/>
</dbReference>
<dbReference type="Ensembl" id="ENSRNOT00000092971.2">
    <molecule id="Q812E9-2"/>
    <property type="protein sequence ID" value="ENSRNOP00000075962.1"/>
    <property type="gene ID" value="ENSRNOG00000010731.8"/>
</dbReference>
<dbReference type="GeneID" id="306439"/>
<dbReference type="KEGG" id="rno:306439"/>
<dbReference type="AGR" id="RGD:631368"/>
<dbReference type="CTD" id="2823"/>
<dbReference type="RGD" id="631368">
    <property type="gene designation" value="Gpm6a"/>
</dbReference>
<dbReference type="eggNOG" id="KOG4800">
    <property type="taxonomic scope" value="Eukaryota"/>
</dbReference>
<dbReference type="GeneTree" id="ENSGT00390000006915"/>
<dbReference type="HOGENOM" id="CLU_064167_2_0_1"/>
<dbReference type="InParanoid" id="Q812E9"/>
<dbReference type="OMA" id="CTLNENF"/>
<dbReference type="OrthoDB" id="9993736at2759"/>
<dbReference type="PhylomeDB" id="Q812E9"/>
<dbReference type="TreeFam" id="TF315162"/>
<dbReference type="PRO" id="PR:Q812E9"/>
<dbReference type="Proteomes" id="UP000002494">
    <property type="component" value="Chromosome 16"/>
</dbReference>
<dbReference type="Proteomes" id="UP000234681">
    <property type="component" value="Chromosome 16"/>
</dbReference>
<dbReference type="Bgee" id="ENSRNOG00000010731">
    <property type="expression patterns" value="Expressed in frontal cortex and 19 other cell types or tissues"/>
</dbReference>
<dbReference type="ExpressionAtlas" id="Q812E9">
    <property type="expression patterns" value="baseline and differential"/>
</dbReference>
<dbReference type="GO" id="GO:0044295">
    <property type="term" value="C:axonal growth cone"/>
    <property type="evidence" value="ECO:0000250"/>
    <property type="project" value="UniProtKB"/>
</dbReference>
<dbReference type="GO" id="GO:0043197">
    <property type="term" value="C:dendritic spine"/>
    <property type="evidence" value="ECO:0007669"/>
    <property type="project" value="UniProtKB-SubCell"/>
</dbReference>
<dbReference type="GO" id="GO:0030175">
    <property type="term" value="C:filopodium"/>
    <property type="evidence" value="ECO:0000314"/>
    <property type="project" value="UniProtKB"/>
</dbReference>
<dbReference type="GO" id="GO:0098978">
    <property type="term" value="C:glutamatergic synapse"/>
    <property type="evidence" value="ECO:0000314"/>
    <property type="project" value="SynGO"/>
</dbReference>
<dbReference type="GO" id="GO:0043005">
    <property type="term" value="C:neuron projection"/>
    <property type="evidence" value="ECO:0000314"/>
    <property type="project" value="UniProtKB"/>
</dbReference>
<dbReference type="GO" id="GO:0043025">
    <property type="term" value="C:neuronal cell body"/>
    <property type="evidence" value="ECO:0000314"/>
    <property type="project" value="UniProtKB"/>
</dbReference>
<dbReference type="GO" id="GO:0098688">
    <property type="term" value="C:parallel fiber to Purkinje cell synapse"/>
    <property type="evidence" value="ECO:0000314"/>
    <property type="project" value="SynGO"/>
</dbReference>
<dbReference type="GO" id="GO:0005886">
    <property type="term" value="C:plasma membrane"/>
    <property type="evidence" value="ECO:0000314"/>
    <property type="project" value="UniProtKB"/>
</dbReference>
<dbReference type="GO" id="GO:0098793">
    <property type="term" value="C:presynapse"/>
    <property type="evidence" value="ECO:0000314"/>
    <property type="project" value="SynGO"/>
</dbReference>
<dbReference type="GO" id="GO:0048787">
    <property type="term" value="C:presynaptic active zone membrane"/>
    <property type="evidence" value="ECO:0000314"/>
    <property type="project" value="SynGO"/>
</dbReference>
<dbReference type="GO" id="GO:0005262">
    <property type="term" value="F:calcium channel activity"/>
    <property type="evidence" value="ECO:0000314"/>
    <property type="project" value="RGD"/>
</dbReference>
<dbReference type="GO" id="GO:0003407">
    <property type="term" value="P:neural retina development"/>
    <property type="evidence" value="ECO:0000250"/>
    <property type="project" value="UniProtKB"/>
</dbReference>
<dbReference type="GO" id="GO:0001764">
    <property type="term" value="P:neuron migration"/>
    <property type="evidence" value="ECO:0000250"/>
    <property type="project" value="UniProtKB"/>
</dbReference>
<dbReference type="GO" id="GO:0031175">
    <property type="term" value="P:neuron projection development"/>
    <property type="evidence" value="ECO:0000318"/>
    <property type="project" value="GO_Central"/>
</dbReference>
<dbReference type="GO" id="GO:0048812">
    <property type="term" value="P:neuron projection morphogenesis"/>
    <property type="evidence" value="ECO:0000250"/>
    <property type="project" value="UniProtKB"/>
</dbReference>
<dbReference type="GO" id="GO:0051491">
    <property type="term" value="P:positive regulation of filopodium assembly"/>
    <property type="evidence" value="ECO:0000314"/>
    <property type="project" value="UniProtKB"/>
</dbReference>
<dbReference type="GO" id="GO:0050807">
    <property type="term" value="P:regulation of synapse organization"/>
    <property type="evidence" value="ECO:0000314"/>
    <property type="project" value="SynGO"/>
</dbReference>
<dbReference type="GO" id="GO:0009617">
    <property type="term" value="P:response to bacterium"/>
    <property type="evidence" value="ECO:0000266"/>
    <property type="project" value="RGD"/>
</dbReference>
<dbReference type="GO" id="GO:0048863">
    <property type="term" value="P:stem cell differentiation"/>
    <property type="evidence" value="ECO:0000250"/>
    <property type="project" value="UniProtKB"/>
</dbReference>
<dbReference type="GO" id="GO:0007416">
    <property type="term" value="P:synapse assembly"/>
    <property type="evidence" value="ECO:0000314"/>
    <property type="project" value="UniProtKB"/>
</dbReference>
<dbReference type="InterPro" id="IPR001614">
    <property type="entry name" value="Myelin_PLP"/>
</dbReference>
<dbReference type="InterPro" id="IPR018237">
    <property type="entry name" value="Myelin_PLP_CS"/>
</dbReference>
<dbReference type="PANTHER" id="PTHR11683">
    <property type="entry name" value="MYELIN PROTEOLIPID"/>
    <property type="match status" value="1"/>
</dbReference>
<dbReference type="PANTHER" id="PTHR11683:SF4">
    <property type="entry name" value="NEURONAL MEMBRANE GLYCOPROTEIN M6-A"/>
    <property type="match status" value="1"/>
</dbReference>
<dbReference type="Pfam" id="PF01275">
    <property type="entry name" value="Myelin_PLP"/>
    <property type="match status" value="1"/>
</dbReference>
<dbReference type="PRINTS" id="PR00214">
    <property type="entry name" value="MYELINPLP"/>
</dbReference>
<dbReference type="SMART" id="SM00002">
    <property type="entry name" value="PLP"/>
    <property type="match status" value="1"/>
</dbReference>
<dbReference type="PROSITE" id="PS00575">
    <property type="entry name" value="MYELIN_PLP_1"/>
    <property type="match status" value="1"/>
</dbReference>
<dbReference type="PROSITE" id="PS01004">
    <property type="entry name" value="MYELIN_PLP_2"/>
    <property type="match status" value="1"/>
</dbReference>
<gene>
    <name type="primary">Gpm6a</name>
    <name type="synonym">m6a</name>
</gene>
<feature type="chain" id="PRO_0000418016" description="Neuronal membrane glycoprotein M6-a">
    <location>
        <begin position="1"/>
        <end position="278"/>
    </location>
</feature>
<feature type="topological domain" description="Cytoplasmic" evidence="4">
    <location>
        <begin position="1"/>
        <end position="22"/>
    </location>
</feature>
<feature type="transmembrane region" description="Helical" evidence="4">
    <location>
        <begin position="23"/>
        <end position="43"/>
    </location>
</feature>
<feature type="topological domain" description="Extracellular" evidence="4">
    <location>
        <begin position="44"/>
        <end position="84"/>
    </location>
</feature>
<feature type="transmembrane region" description="Helical" evidence="4">
    <location>
        <begin position="85"/>
        <end position="105"/>
    </location>
</feature>
<feature type="topological domain" description="Cytoplasmic" evidence="4">
    <location>
        <begin position="106"/>
        <end position="127"/>
    </location>
</feature>
<feature type="transmembrane region" description="Helical" evidence="4">
    <location>
        <begin position="128"/>
        <end position="148"/>
    </location>
</feature>
<feature type="topological domain" description="Extracellular" evidence="9">
    <location>
        <begin position="149"/>
        <end position="213"/>
    </location>
</feature>
<feature type="transmembrane region" description="Helical" evidence="4">
    <location>
        <begin position="214"/>
        <end position="234"/>
    </location>
</feature>
<feature type="topological domain" description="Cytoplasmic" evidence="4">
    <location>
        <begin position="235"/>
        <end position="278"/>
    </location>
</feature>
<feature type="modified residue" description="N-acetylmethionine" evidence="3">
    <location>
        <position position="1"/>
    </location>
</feature>
<feature type="modified residue" description="Phosphoserine" evidence="14">
    <location>
        <position position="256"/>
    </location>
</feature>
<feature type="modified residue" description="Phosphothreonine" evidence="14">
    <location>
        <position position="278"/>
    </location>
</feature>
<feature type="glycosylation site" description="N-linked (GlcNAc...) asparagine" evidence="4">
    <location>
        <position position="164"/>
    </location>
</feature>
<feature type="glycosylation site" description="N-linked (GlcNAc...) asparagine" evidence="4">
    <location>
        <position position="208"/>
    </location>
</feature>
<feature type="disulfide bond" evidence="9">
    <location>
        <begin position="174"/>
        <end position="192"/>
    </location>
</feature>
<feature type="splice variant" id="VSP_043957" description="In isoform 2." evidence="12">
    <original>MEENMEEGQTQK</original>
    <variation>M</variation>
    <location>
        <begin position="1"/>
        <end position="12"/>
    </location>
</feature>
<feature type="mutagenesis site" description="Reduces motility of Gpm6a-induced filopodia; when associated with A-256, A-267 and A-268." evidence="10">
    <original>T</original>
    <variation>A</variation>
    <location>
        <position position="10"/>
    </location>
</feature>
<feature type="mutagenesis site" description="Abolishess cell surface expression." evidence="9">
    <original>C</original>
    <variation>A</variation>
    <location>
        <position position="162"/>
    </location>
</feature>
<feature type="mutagenesis site" description="Impairs Gpm6a-induced filopodium formation." evidence="9">
    <original>C</original>
    <variation>A</variation>
    <location>
        <position position="174"/>
    </location>
</feature>
<feature type="mutagenesis site" description="Impairs synaptic density in primary hippocampal neurons; when associated with A-192." evidence="9">
    <original>C</original>
    <variation>A</variation>
    <location>
        <position position="174"/>
    </location>
</feature>
<feature type="mutagenesis site" description="Impairs Gpm6a-induced filopodium formation." evidence="9">
    <original>C</original>
    <variation>A</variation>
    <location>
        <position position="192"/>
    </location>
</feature>
<feature type="mutagenesis site" description="Impairs synaptic density in primary hippocampal neurons; when associated with A-174." evidence="9">
    <original>C</original>
    <variation>A</variation>
    <location>
        <position position="192"/>
    </location>
</feature>
<feature type="mutagenesis site" description="Abolishess cell surface expression." evidence="9">
    <original>C</original>
    <variation>A</variation>
    <location>
        <position position="202"/>
    </location>
</feature>
<feature type="mutagenesis site" description="Reduces motility of Gpm6a-induced filopodia; when associated with A-10, A-267 and A-268." evidence="10">
    <original>S</original>
    <variation>A</variation>
    <location>
        <position position="256"/>
    </location>
</feature>
<feature type="mutagenesis site" description="Reduces motility of Gpm6a-induced filopodia; when associated with A-10, A-256 and A-268." evidence="10">
    <original>S</original>
    <variation>A</variation>
    <location>
        <position position="267"/>
    </location>
</feature>
<feature type="mutagenesis site" description="Reduces motility of Gpm6a-induced filopodia; when associated with A-10, A-256 and A-267." evidence="10">
    <original>T</original>
    <variation>A</variation>
    <location>
        <position position="268"/>
    </location>
</feature>
<accession>Q812E9</accession>